<dbReference type="EC" id="1.13.11.20"/>
<dbReference type="EMBL" id="HE601085">
    <property type="protein sequence ID" value="CAP37450.3"/>
    <property type="molecule type" value="Genomic_DNA"/>
</dbReference>
<dbReference type="SMR" id="Q60TI7"/>
<dbReference type="FunCoup" id="Q60TI7">
    <property type="interactions" value="62"/>
</dbReference>
<dbReference type="STRING" id="6238.Q60TI7"/>
<dbReference type="EnsemblMetazoa" id="CBG20456.1">
    <property type="protein sequence ID" value="CBG20456.1"/>
    <property type="gene ID" value="WBGene00039434"/>
</dbReference>
<dbReference type="KEGG" id="cbr:CBG_20456"/>
<dbReference type="CTD" id="8574068"/>
<dbReference type="WormBase" id="CBG20456">
    <property type="protein sequence ID" value="CBP11524"/>
    <property type="gene ID" value="WBGene00039434"/>
    <property type="gene designation" value="Cbr-cdo-1"/>
</dbReference>
<dbReference type="eggNOG" id="KOG4064">
    <property type="taxonomic scope" value="Eukaryota"/>
</dbReference>
<dbReference type="HOGENOM" id="CLU_079443_4_1_1"/>
<dbReference type="InParanoid" id="Q60TI7"/>
<dbReference type="OMA" id="YTENQVT"/>
<dbReference type="OrthoDB" id="543511at2759"/>
<dbReference type="UniPathway" id="UPA00012">
    <property type="reaction ID" value="UER00537"/>
</dbReference>
<dbReference type="Proteomes" id="UP000008549">
    <property type="component" value="Unassembled WGS sequence"/>
</dbReference>
<dbReference type="GO" id="GO:0017172">
    <property type="term" value="F:cysteine dioxygenase activity"/>
    <property type="evidence" value="ECO:0000318"/>
    <property type="project" value="GO_Central"/>
</dbReference>
<dbReference type="GO" id="GO:0008198">
    <property type="term" value="F:ferrous iron binding"/>
    <property type="evidence" value="ECO:0000318"/>
    <property type="project" value="GO_Central"/>
</dbReference>
<dbReference type="GO" id="GO:0019448">
    <property type="term" value="P:L-cysteine catabolic process"/>
    <property type="evidence" value="ECO:0000318"/>
    <property type="project" value="GO_Central"/>
</dbReference>
<dbReference type="GO" id="GO:0042412">
    <property type="term" value="P:taurine biosynthetic process"/>
    <property type="evidence" value="ECO:0007669"/>
    <property type="project" value="UniProtKB-UniPathway"/>
</dbReference>
<dbReference type="CDD" id="cd10548">
    <property type="entry name" value="cupin_CDO"/>
    <property type="match status" value="1"/>
</dbReference>
<dbReference type="FunFam" id="2.60.120.10:FF:000045">
    <property type="entry name" value="Cysteine dioxygenase 1"/>
    <property type="match status" value="1"/>
</dbReference>
<dbReference type="Gene3D" id="2.60.120.10">
    <property type="entry name" value="Jelly Rolls"/>
    <property type="match status" value="1"/>
</dbReference>
<dbReference type="InterPro" id="IPR010300">
    <property type="entry name" value="CDO_1"/>
</dbReference>
<dbReference type="InterPro" id="IPR014710">
    <property type="entry name" value="RmlC-like_jellyroll"/>
</dbReference>
<dbReference type="InterPro" id="IPR011051">
    <property type="entry name" value="RmlC_Cupin_sf"/>
</dbReference>
<dbReference type="PANTHER" id="PTHR12918">
    <property type="entry name" value="CYSTEINE DIOXYGENASE"/>
    <property type="match status" value="1"/>
</dbReference>
<dbReference type="PANTHER" id="PTHR12918:SF1">
    <property type="entry name" value="CYSTEINE DIOXYGENASE TYPE 1"/>
    <property type="match status" value="1"/>
</dbReference>
<dbReference type="Pfam" id="PF05995">
    <property type="entry name" value="CDO_I"/>
    <property type="match status" value="1"/>
</dbReference>
<dbReference type="SUPFAM" id="SSF51182">
    <property type="entry name" value="RmlC-like cupins"/>
    <property type="match status" value="1"/>
</dbReference>
<name>CDO_CAEBR</name>
<accession>Q60TI7</accession>
<accession>A8XXT1</accession>
<protein>
    <recommendedName>
        <fullName>Cysteine dioxygenase</fullName>
        <shortName>CDO</shortName>
        <ecNumber>1.13.11.20</ecNumber>
    </recommendedName>
</protein>
<comment type="catalytic activity">
    <reaction>
        <text>L-cysteine + O2 = 3-sulfino-L-alanine + H(+)</text>
        <dbReference type="Rhea" id="RHEA:20441"/>
        <dbReference type="ChEBI" id="CHEBI:15378"/>
        <dbReference type="ChEBI" id="CHEBI:15379"/>
        <dbReference type="ChEBI" id="CHEBI:35235"/>
        <dbReference type="ChEBI" id="CHEBI:61085"/>
        <dbReference type="EC" id="1.13.11.20"/>
    </reaction>
</comment>
<comment type="cofactor">
    <cofactor evidence="1">
        <name>Fe cation</name>
        <dbReference type="ChEBI" id="CHEBI:24875"/>
    </cofactor>
    <text evidence="1">Binds 1 Fe cation per subunit.</text>
</comment>
<comment type="pathway">
    <text>Organosulfur biosynthesis; taurine biosynthesis; hypotaurine from L-cysteine: step 1/2.</text>
</comment>
<comment type="PTM">
    <text evidence="2">The thioether cross-link between Cys-85 and Tyr-149 plays a structural role through stabilizing the Fe(2+) ion, and prevents the production of highly damaging free hydroxyl radicals by holding the oxygen radical via hydroxyl hydrogen.</text>
</comment>
<comment type="similarity">
    <text evidence="3">Belongs to the cysteine dioxygenase family.</text>
</comment>
<sequence>MVSFVQLVVQIREIFEHKMVDVDEVMKLMGSYKSDINEWRRFAIFDMNKYTRNLVDIGNGKYNLMILCWGPGMASSVHDHTDAHCFVKILDGELTETKYDWPKKKHTPLETIENKTYGLNGVSYMNDELGLHRMENQSHSNGAVSLHLYIPPYSTCNAFDERTGKKTKCTVTFYSKYGEKIDYHGSKEGK</sequence>
<keyword id="KW-0223">Dioxygenase</keyword>
<keyword id="KW-0408">Iron</keyword>
<keyword id="KW-0479">Metal-binding</keyword>
<keyword id="KW-0560">Oxidoreductase</keyword>
<keyword id="KW-1185">Reference proteome</keyword>
<keyword id="KW-0883">Thioether bond</keyword>
<gene>
    <name type="primary">cdo-1</name>
    <name type="ORF">CBG20456</name>
</gene>
<organism>
    <name type="scientific">Caenorhabditis briggsae</name>
    <dbReference type="NCBI Taxonomy" id="6238"/>
    <lineage>
        <taxon>Eukaryota</taxon>
        <taxon>Metazoa</taxon>
        <taxon>Ecdysozoa</taxon>
        <taxon>Nematoda</taxon>
        <taxon>Chromadorea</taxon>
        <taxon>Rhabditida</taxon>
        <taxon>Rhabditina</taxon>
        <taxon>Rhabditomorpha</taxon>
        <taxon>Rhabditoidea</taxon>
        <taxon>Rhabditidae</taxon>
        <taxon>Peloderinae</taxon>
        <taxon>Caenorhabditis</taxon>
    </lineage>
</organism>
<reference key="1">
    <citation type="journal article" date="2003" name="PLoS Biol.">
        <title>The genome sequence of Caenorhabditis briggsae: a platform for comparative genomics.</title>
        <authorList>
            <person name="Stein L.D."/>
            <person name="Bao Z."/>
            <person name="Blasiar D."/>
            <person name="Blumenthal T."/>
            <person name="Brent M.R."/>
            <person name="Chen N."/>
            <person name="Chinwalla A."/>
            <person name="Clarke L."/>
            <person name="Clee C."/>
            <person name="Coghlan A."/>
            <person name="Coulson A."/>
            <person name="D'Eustachio P."/>
            <person name="Fitch D.H.A."/>
            <person name="Fulton L.A."/>
            <person name="Fulton R.E."/>
            <person name="Griffiths-Jones S."/>
            <person name="Harris T.W."/>
            <person name="Hillier L.W."/>
            <person name="Kamath R."/>
            <person name="Kuwabara P.E."/>
            <person name="Mardis E.R."/>
            <person name="Marra M.A."/>
            <person name="Miner T.L."/>
            <person name="Minx P."/>
            <person name="Mullikin J.C."/>
            <person name="Plumb R.W."/>
            <person name="Rogers J."/>
            <person name="Schein J.E."/>
            <person name="Sohrmann M."/>
            <person name="Spieth J."/>
            <person name="Stajich J.E."/>
            <person name="Wei C."/>
            <person name="Willey D."/>
            <person name="Wilson R.K."/>
            <person name="Durbin R.M."/>
            <person name="Waterston R.H."/>
        </authorList>
    </citation>
    <scope>NUCLEOTIDE SEQUENCE [LARGE SCALE GENOMIC DNA]</scope>
    <source>
        <strain>AF16</strain>
    </source>
</reference>
<evidence type="ECO:0000250" key="1"/>
<evidence type="ECO:0000250" key="2">
    <source>
        <dbReference type="UniProtKB" id="Q16878"/>
    </source>
</evidence>
<evidence type="ECO:0000305" key="3"/>
<feature type="chain" id="PRO_0000206611" description="Cysteine dioxygenase">
    <location>
        <begin position="1"/>
        <end position="190"/>
    </location>
</feature>
<feature type="binding site" evidence="2">
    <location>
        <position position="78"/>
    </location>
    <ligand>
        <name>Fe cation</name>
        <dbReference type="ChEBI" id="CHEBI:24875"/>
        <note>catalytic</note>
    </ligand>
</feature>
<feature type="binding site" evidence="2">
    <location>
        <position position="80"/>
    </location>
    <ligand>
        <name>Fe cation</name>
        <dbReference type="ChEBI" id="CHEBI:24875"/>
        <note>catalytic</note>
    </ligand>
</feature>
<feature type="binding site" evidence="2">
    <location>
        <position position="132"/>
    </location>
    <ligand>
        <name>Fe cation</name>
        <dbReference type="ChEBI" id="CHEBI:24875"/>
        <note>catalytic</note>
    </ligand>
</feature>
<feature type="cross-link" description="3'-(S-cysteinyl)-tyrosine (Cys-Tyr)" evidence="2">
    <location>
        <begin position="85"/>
        <end position="149"/>
    </location>
</feature>
<proteinExistence type="inferred from homology"/>